<proteinExistence type="evidence at protein level"/>
<sequence length="299" mass="32016">MAEEQARHVKNGLECIRALKAEPIGSLAVEEAMAAWSEISDNPGQDRATCKEEEAGSSGLSKPCLSAIGSTEGGAPRIRGQGSGESDDDAETLGIPSRNLQASSTGLQCYHVYDHSGEAVKGIQDADSIMVQSGLDGDSTLSGGDDESENSDVDIGEPDTEGYAITDRGSAPISMGFRASDVETAEGGEIHELLKLQSRGNNFPKLGKTLNVPPPPNPSRASTSETPIKKGHRREIGLIWNGDRVFIDRWCNPMCSKVTLGTIRARCTCGECPRVCEQCRTDTGVDTRIWYHNLPEIPE</sequence>
<evidence type="ECO:0000250" key="1"/>
<evidence type="ECO:0000250" key="2">
    <source>
        <dbReference type="UniProtKB" id="P11207"/>
    </source>
</evidence>
<evidence type="ECO:0000250" key="3">
    <source>
        <dbReference type="UniProtKB" id="Q77M19"/>
    </source>
</evidence>
<evidence type="ECO:0000250" key="4">
    <source>
        <dbReference type="UniProtKB" id="Q9EMA9"/>
    </source>
</evidence>
<evidence type="ECO:0000256" key="5">
    <source>
        <dbReference type="SAM" id="MobiDB-lite"/>
    </source>
</evidence>
<evidence type="ECO:0000269" key="6">
    <source>
    </source>
</evidence>
<evidence type="ECO:0000269" key="7">
    <source>
    </source>
</evidence>
<evidence type="ECO:0000269" key="8">
    <source>
    </source>
</evidence>
<evidence type="ECO:0000269" key="9">
    <source>
    </source>
</evidence>
<evidence type="ECO:0000269" key="10">
    <source>
    </source>
</evidence>
<evidence type="ECO:0000269" key="11">
    <source>
    </source>
</evidence>
<evidence type="ECO:0000269" key="12">
    <source>
    </source>
</evidence>
<evidence type="ECO:0000269" key="13">
    <source>
    </source>
</evidence>
<evidence type="ECO:0000305" key="14"/>
<protein>
    <recommendedName>
        <fullName>Non-structural protein V</fullName>
    </recommendedName>
</protein>
<name>V_MEASC</name>
<gene>
    <name type="primary">P/V</name>
</gene>
<reference key="1">
    <citation type="journal article" date="2000" name="Virus Genes">
        <title>Comparative nucleotide sequence analyses of the entire genomes of B95a cell-isolated and vero cell-isolated measles viruses from the same patient.</title>
        <authorList>
            <person name="Takeuchi K."/>
            <person name="Miyajima N."/>
            <person name="Kobune F."/>
            <person name="Tashiro M."/>
        </authorList>
    </citation>
    <scope>NUCLEOTIDE SEQUENCE [GENOMIC RNA]</scope>
</reference>
<reference key="2">
    <citation type="journal article" date="2003" name="FEBS Lett.">
        <title>Measles virus V protein blocks interferon (IFN)-alpha/beta but not IFN-gamma signaling by inhibiting STAT1 and STAT2 phosphorylation.</title>
        <authorList>
            <person name="Takeuchi K."/>
            <person name="Kadota S.I."/>
            <person name="Takeda M."/>
            <person name="Miyajima N."/>
            <person name="Nagata K."/>
        </authorList>
    </citation>
    <scope>FUNCTION</scope>
</reference>
<reference key="3">
    <citation type="journal article" date="2008" name="J. Virol.">
        <title>STAT2 is a primary target for measles virus V protein-mediated alpha/beta interferon signaling inhibition.</title>
        <authorList>
            <person name="Ramachandran A."/>
            <person name="Parisien J.P."/>
            <person name="Horvath C.M."/>
        </authorList>
    </citation>
    <scope>FUNCTION</scope>
    <scope>INTERACTION WITH HOST STAT2</scope>
</reference>
<reference key="4">
    <citation type="journal article" date="2008" name="J. Virol.">
        <title>Measles virus V protein is a decoy substrate for IkappaB kinase alpha and prevents Toll-like receptor 7/9-mediated interferon induction.</title>
        <authorList>
            <person name="Pfaller C.K."/>
            <person name="Conzelmann K.K."/>
        </authorList>
    </citation>
    <scope>INTERACTION WITH HOST IRF7</scope>
    <scope>INTERACTION WITH HOST CHUK</scope>
    <source>
        <strain>Schwarz vaccine</strain>
    </source>
</reference>
<reference key="5">
    <citation type="journal article" date="2009" name="J. Virol.">
        <title>A shared interface mediates paramyxovirus interference with antiviral RNA helicases MDA5 and LGP2.</title>
        <authorList>
            <person name="Parisien J.P."/>
            <person name="Bamming D."/>
            <person name="Komuro A."/>
            <person name="Ramachandran A."/>
            <person name="Rodriguez J.J."/>
            <person name="Barber G."/>
            <person name="Wojahn R.D."/>
            <person name="Horvath C.M."/>
        </authorList>
    </citation>
    <scope>FUNCTION</scope>
    <scope>INTERACTION WITH HOST IFIH1/MDA5 AND DHX58/LGP2</scope>
</reference>
<reference key="6">
    <citation type="journal article" date="2009" name="Virology">
        <title>Inhibition of IFN-alpha/beta signaling by two discrete peptides within measles virus V protein that specifically bind STAT1 and STAT2.</title>
        <authorList>
            <consortium name="Infection-MAPping project I-MAP"/>
            <person name="Caignard G."/>
            <person name="Bourai M."/>
            <person name="Jacob Y."/>
            <person name="Tangy F."/>
            <person name="Vidalain P.O."/>
        </authorList>
    </citation>
    <scope>DOMAIN</scope>
    <scope>INTERACTION WITH HOST STAT2</scope>
    <scope>MUTAGENESIS OF TRP-240 AND TRP-250</scope>
</reference>
<reference key="7">
    <citation type="journal article" date="2013" name="PLoS ONE">
        <title>Morbillivirus v proteins exhibit multiple mechanisms to block type 1 and type 2 interferon signalling pathways.</title>
        <authorList>
            <person name="Chinnakannan S.K."/>
            <person name="Nanda S.K."/>
            <person name="Baron M.D."/>
        </authorList>
    </citation>
    <scope>FUNCTION</scope>
    <scope>INTERACTION WITH HOST JAK1</scope>
    <scope>INTERACTION WITH HOST TYK2</scope>
    <source>
        <strain>Dublin</strain>
    </source>
</reference>
<reference key="8">
    <citation type="journal article" date="2014" name="Cell Host Microbe">
        <title>Antagonism of the phosphatase PP1 by the measles virus V protein is required for innate immune escape of MDA5.</title>
        <authorList>
            <person name="Davis M.E."/>
            <person name="Wang M.K."/>
            <person name="Rennick L.J."/>
            <person name="Full F."/>
            <person name="Gableske S."/>
            <person name="Mesman A.W."/>
            <person name="Gringhuis S.I."/>
            <person name="Geijtenbeek T.B."/>
            <person name="Duprex W.P."/>
            <person name="Gack M.U."/>
        </authorList>
    </citation>
    <scope>IDENTIFICATION IN A COMPLEX WITH HOST PPP1CA AND PPP1CC</scope>
    <scope>DOMAIN</scope>
    <scope>FUNCTION</scope>
</reference>
<reference key="9">
    <citation type="journal article" date="2020" name="J. Virol.">
        <title>The Measles Virus V Protein Binding Site to STAT2 Overlaps That of IRF9.</title>
        <authorList>
            <person name="Nagano Y."/>
            <person name="Sugiyama A."/>
            <person name="Kimoto M."/>
            <person name="Wakahara T."/>
            <person name="Noguchi Y."/>
            <person name="Jiang X."/>
            <person name="Saijo S."/>
            <person name="Shimizu N."/>
            <person name="Yabuno N."/>
            <person name="Yao M."/>
            <person name="Gooley P.R."/>
            <person name="Moseley G.W."/>
            <person name="Tadokoro T."/>
            <person name="Maenaka K."/>
            <person name="Ose T."/>
        </authorList>
    </citation>
    <scope>INTERACTION WITH HOST STAT2</scope>
    <scope>INTERACTION WITH HOST STAT1</scope>
    <scope>INTERACTION WITH HOST IRF9</scope>
</reference>
<organismHost>
    <name type="scientific">Homo sapiens</name>
    <name type="common">Human</name>
    <dbReference type="NCBI Taxonomy" id="9606"/>
</organismHost>
<keyword id="KW-1035">Host cytoplasm</keyword>
<keyword id="KW-0945">Host-virus interaction</keyword>
<keyword id="KW-1090">Inhibition of host innate immune response by virus</keyword>
<keyword id="KW-1114">Inhibition of host interferon signaling pathway by virus</keyword>
<keyword id="KW-1093">Inhibition of host IRF7 by virus</keyword>
<keyword id="KW-1089">Inhibition of host MDA5 by virus</keyword>
<keyword id="KW-1113">Inhibition of host RLR pathway by virus</keyword>
<keyword id="KW-1106">Inhibition of host STAT2 by virus</keyword>
<keyword id="KW-0922">Interferon antiviral system evasion</keyword>
<keyword id="KW-0479">Metal-binding</keyword>
<keyword id="KW-1185">Reference proteome</keyword>
<keyword id="KW-0691">RNA editing</keyword>
<keyword id="KW-0899">Viral immunoevasion</keyword>
<keyword id="KW-0862">Zinc</keyword>
<accession>P0C774</accession>
<feature type="chain" id="PRO_0000394721" description="Non-structural protein V">
    <location>
        <begin position="1"/>
        <end position="299"/>
    </location>
</feature>
<feature type="region of interest" description="Disordered" evidence="5">
    <location>
        <begin position="40"/>
        <end position="94"/>
    </location>
</feature>
<feature type="region of interest" description="Interaction with host STAT1" evidence="9">
    <location>
        <begin position="110"/>
        <end position="120"/>
    </location>
</feature>
<feature type="region of interest" description="Disordered" evidence="5">
    <location>
        <begin position="133"/>
        <end position="168"/>
    </location>
</feature>
<feature type="region of interest" description="Disordered" evidence="5">
    <location>
        <begin position="204"/>
        <end position="229"/>
    </location>
</feature>
<feature type="compositionally biased region" description="Low complexity" evidence="5">
    <location>
        <begin position="133"/>
        <end position="143"/>
    </location>
</feature>
<feature type="compositionally biased region" description="Acidic residues" evidence="5">
    <location>
        <begin position="144"/>
        <end position="160"/>
    </location>
</feature>
<feature type="binding site" evidence="2">
    <location>
        <position position="232"/>
    </location>
    <ligand>
        <name>Zn(2+)</name>
        <dbReference type="ChEBI" id="CHEBI:29105"/>
        <label>1</label>
    </ligand>
</feature>
<feature type="binding site" evidence="2">
    <location>
        <position position="251"/>
    </location>
    <ligand>
        <name>Zn(2+)</name>
        <dbReference type="ChEBI" id="CHEBI:29105"/>
        <label>1</label>
    </ligand>
</feature>
<feature type="binding site" evidence="2">
    <location>
        <position position="255"/>
    </location>
    <ligand>
        <name>Zn(2+)</name>
        <dbReference type="ChEBI" id="CHEBI:29105"/>
        <label>2</label>
    </ligand>
</feature>
<feature type="binding site" evidence="2">
    <location>
        <position position="267"/>
    </location>
    <ligand>
        <name>Zn(2+)</name>
        <dbReference type="ChEBI" id="CHEBI:29105"/>
        <label>2</label>
    </ligand>
</feature>
<feature type="binding site" evidence="2">
    <location>
        <position position="269"/>
    </location>
    <ligand>
        <name>Zn(2+)</name>
        <dbReference type="ChEBI" id="CHEBI:29105"/>
        <label>2</label>
    </ligand>
</feature>
<feature type="binding site" evidence="2">
    <location>
        <position position="272"/>
    </location>
    <ligand>
        <name>Zn(2+)</name>
        <dbReference type="ChEBI" id="CHEBI:29105"/>
        <label>2</label>
    </ligand>
</feature>
<feature type="binding site" evidence="2">
    <location>
        <position position="276"/>
    </location>
    <ligand>
        <name>Zn(2+)</name>
        <dbReference type="ChEBI" id="CHEBI:29105"/>
        <label>1</label>
    </ligand>
</feature>
<feature type="binding site" evidence="2">
    <location>
        <position position="279"/>
    </location>
    <ligand>
        <name>Zn(2+)</name>
        <dbReference type="ChEBI" id="CHEBI:29105"/>
        <label>1</label>
    </ligand>
</feature>
<feature type="site" description="Interaction with host STAT2" evidence="9 13">
    <location>
        <position position="240"/>
    </location>
</feature>
<feature type="site" description="Interaction with host STAT2" evidence="9 13">
    <location>
        <position position="246"/>
    </location>
</feature>
<feature type="site" description="Interaction with host STAT2" evidence="9 13">
    <location>
        <position position="248"/>
    </location>
</feature>
<feature type="site" description="Interaction with host STAT2" evidence="9 13">
    <location>
        <position position="250"/>
    </location>
</feature>
<feature type="mutagenesis site" description="Impaired interaction with host STAT2. Loss of ability to block IFN-alpha/beta signaling." evidence="9">
    <original>W</original>
    <variation>A</variation>
    <location>
        <position position="240"/>
    </location>
</feature>
<feature type="mutagenesis site" description="Impaired interaction with host STAT2. Loss of ability to block IFN-alpha/beta signaling." evidence="9">
    <original>W</original>
    <variation>A</variation>
    <location>
        <position position="250"/>
    </location>
</feature>
<comment type="function">
    <text evidence="4 6 7 10 11 12">Plays an essential role in the inhibition of host immune response. Prevents the establishment of cellular antiviral state by blocking interferon-alpha/beta (IFN-alpha/beta) production and signaling pathway (PubMed:12804771). Interacts with host IFIH1/MDA5 and DHX58/LGP2 to inhibit the transduction pathway involved in the activation of IFN-beta promoter, thus protecting the virus against cell antiviral state (PubMed:19403670). Blocks the type I interferon signaling pathway by interacting with host TYK2 and thereby inhibiting downstream STAT1 and STAT2 phosphorylation (PubMed:12804771, PubMed:18579593, PubMed:23431397). Blocks the type I interferon signaling pathway by disrupting the RIG-I signaling pathway (By similarity). Moderately affects the type II interferon signaling. Prevents PP1alpha/gamma-mediated dephosphorylation of host IFIH1/MDA5 and thus blocks its activation (PubMed:25011105).</text>
</comment>
<comment type="subunit">
    <text evidence="3 4 7 8 9 10 11 12 13">Interacts with host IFIH1/MDA5 and DHX58/LGP2; these interactions are involved in the inhibition of the host type I interferon signaling pathway (PubMed:19403670). Interacts with host TYK2; this interaction inhibits the type I interferon signaling pathway without affecting the type II pathway (PubMed:23431397). Interacts with host IRF7; this interaction inhibits IRF7 translocation to the nucleus (PubMed:18922877). Interacts with host CHUK (PubMed:18922877). Interacts with host RELA/p65; this interaction inhibits the nuclear translocation of NF-KappaB (By similarity). Interacts (via N-terminus) with host STAT1 and JAK1; these interactions inhibit STAT1 phosphorylation by Jak1 and thereby the type I interferon signaling pathway (PubMed:32581091). Interacts (via C-terminus) with host STAT2; this interaction is involved in the inhibition of the host type I interferon signaling pathway (PubMed:18579593, PubMed:19007958, PubMed:32581091). Forms a complex with host PPP1CA and PPP1CC; this interaction prevents dephosphorylation of host IFIH1/MDA5 and leads to the inhibition of the host type I interferon signaling pathway (PubMed:25011105). Interacts with host IRF9; this interaction prevents the binding of IRF9 to STAT2 and thereby the type I interferon signaling pathway (PubMed:32581091). Interacts with host RIGI regulatory protein (via CARDs domain) and host TRIM25 (via SPRY domain); these interactions prevent TRIM25-mediated ubiquitination of RIG-I and disrupts downstream RIG-I signaling (By similarity).</text>
</comment>
<comment type="interaction">
    <interactant intactId="EBI-3650423">
        <id>P0C774</id>
    </interactant>
    <interactant intactId="EBI-6115771">
        <id>Q9BYX4</id>
        <label>IFIH1</label>
    </interactant>
    <organismsDiffer>true</organismsDiffer>
    <experiments>3</experiments>
</comment>
<comment type="interaction">
    <interactant intactId="EBI-3650423">
        <id>P0C774</id>
    </interactant>
    <interactant intactId="EBI-73886">
        <id>Q04206</id>
        <label>RELA</label>
    </interactant>
    <organismsDiffer>true</organismsDiffer>
    <experiments>3</experiments>
</comment>
<comment type="interaction">
    <interactant intactId="EBI-3650423">
        <id>P0C774</id>
    </interactant>
    <interactant intactId="EBI-1546963">
        <id>P52630</id>
        <label>STAT2</label>
    </interactant>
    <organismsDiffer>true</organismsDiffer>
    <experiments>4</experiments>
</comment>
<comment type="subcellular location">
    <subcellularLocation>
        <location evidence="1">Host cytoplasm</location>
    </subcellularLocation>
</comment>
<comment type="domain">
    <text evidence="3 9 12">The N-terminus interacts with host JAK1 and STAT1 (By similarity). The C-terminus interacts with host STAT2 (PubMed:19007958). The C-terminus also interacts with host PP1 (PubMed:25011105).</text>
</comment>
<comment type="RNA editing">
    <location>
        <position position="231"/>
    </location>
    <text>Partially edited. RNA editing at this position consists of an insertion of one guanine nucleotide. The sequence displayed here is the V protein, derived from the edited RNA. The unedited RNA gives rise to the P protein (AC Q9WMB4).</text>
</comment>
<comment type="similarity">
    <text evidence="14">Belongs to the paramyxoviruses V protein family.</text>
</comment>
<organism>
    <name type="scientific">Measles virus (strain Ichinose-B95a)</name>
    <name type="common">MeV</name>
    <name type="synonym">Subacute sclerose panencephalitis virus</name>
    <dbReference type="NCBI Taxonomy" id="645098"/>
    <lineage>
        <taxon>Viruses</taxon>
        <taxon>Riboviria</taxon>
        <taxon>Orthornavirae</taxon>
        <taxon>Negarnaviricota</taxon>
        <taxon>Haploviricotina</taxon>
        <taxon>Monjiviricetes</taxon>
        <taxon>Mononegavirales</taxon>
        <taxon>Paramyxoviridae</taxon>
        <taxon>Orthoparamyxovirinae</taxon>
        <taxon>Morbillivirus</taxon>
        <taxon>Morbillivirus hominis</taxon>
        <taxon>Measles morbillivirus</taxon>
    </lineage>
</organism>
<dbReference type="EMBL" id="AB016162">
    <property type="status" value="NOT_ANNOTATED_CDS"/>
    <property type="molecule type" value="Genomic_RNA"/>
</dbReference>
<dbReference type="SMR" id="P0C774"/>
<dbReference type="DIP" id="DIP-61740N"/>
<dbReference type="IntAct" id="P0C774">
    <property type="interactions" value="5"/>
</dbReference>
<dbReference type="Proteomes" id="UP000008699">
    <property type="component" value="Segment"/>
</dbReference>
<dbReference type="GO" id="GO:0030430">
    <property type="term" value="C:host cell cytoplasm"/>
    <property type="evidence" value="ECO:0007669"/>
    <property type="project" value="UniProtKB-SubCell"/>
</dbReference>
<dbReference type="GO" id="GO:0046872">
    <property type="term" value="F:metal ion binding"/>
    <property type="evidence" value="ECO:0007669"/>
    <property type="project" value="UniProtKB-KW"/>
</dbReference>
<dbReference type="GO" id="GO:0039557">
    <property type="term" value="P:symbiont-mediated suppression of host cytoplasmic pattern recognition receptor signaling pathway via inhibition of IRF7 activity"/>
    <property type="evidence" value="ECO:0007669"/>
    <property type="project" value="UniProtKB-KW"/>
</dbReference>
<dbReference type="GO" id="GO:0039554">
    <property type="term" value="P:symbiont-mediated suppression of host cytoplasmic pattern recognition receptor signaling pathway via inhibition of MDA-5 activity"/>
    <property type="evidence" value="ECO:0007669"/>
    <property type="project" value="UniProtKB-KW"/>
</dbReference>
<dbReference type="GO" id="GO:0039564">
    <property type="term" value="P:symbiont-mediated suppression of host JAK-STAT cascade via inhibition of STAT2 activity"/>
    <property type="evidence" value="ECO:0007669"/>
    <property type="project" value="UniProtKB-KW"/>
</dbReference>
<dbReference type="GO" id="GO:0039502">
    <property type="term" value="P:symbiont-mediated suppression of host type I interferon-mediated signaling pathway"/>
    <property type="evidence" value="ECO:0007669"/>
    <property type="project" value="UniProtKB-KW"/>
</dbReference>
<dbReference type="Gene3D" id="4.10.80.340">
    <property type="match status" value="1"/>
</dbReference>
<dbReference type="InterPro" id="IPR024279">
    <property type="entry name" value="Paramyx_V_Zn-bd"/>
</dbReference>
<dbReference type="InterPro" id="IPR028243">
    <property type="entry name" value="Paramyxo_P/V_N"/>
</dbReference>
<dbReference type="Pfam" id="PF13825">
    <property type="entry name" value="Paramyxo_P_V_N"/>
    <property type="match status" value="1"/>
</dbReference>
<dbReference type="Pfam" id="PF13008">
    <property type="entry name" value="zf-Paramyx-P"/>
    <property type="match status" value="1"/>
</dbReference>